<reference key="1">
    <citation type="journal article" date="2000" name="Genetics">
        <title>Schizosaccharomyces pombe Ste7p is required for both promotion and withholding of the entry to meiosis.</title>
        <authorList>
            <person name="Matsuyama A."/>
            <person name="Yabana N."/>
            <person name="Watanabe Y."/>
            <person name="Yamamoto M."/>
        </authorList>
    </citation>
    <scope>NUCLEOTIDE SEQUENCE [GENOMIC DNA]</scope>
    <scope>CHARACTERIZATION</scope>
</reference>
<reference key="2">
    <citation type="journal article" date="2002" name="Nature">
        <title>The genome sequence of Schizosaccharomyces pombe.</title>
        <authorList>
            <person name="Wood V."/>
            <person name="Gwilliam R."/>
            <person name="Rajandream M.A."/>
            <person name="Lyne M.H."/>
            <person name="Lyne R."/>
            <person name="Stewart A."/>
            <person name="Sgouros J.G."/>
            <person name="Peat N."/>
            <person name="Hayles J."/>
            <person name="Baker S.G."/>
            <person name="Basham D."/>
            <person name="Bowman S."/>
            <person name="Brooks K."/>
            <person name="Brown D."/>
            <person name="Brown S."/>
            <person name="Chillingworth T."/>
            <person name="Churcher C.M."/>
            <person name="Collins M."/>
            <person name="Connor R."/>
            <person name="Cronin A."/>
            <person name="Davis P."/>
            <person name="Feltwell T."/>
            <person name="Fraser A."/>
            <person name="Gentles S."/>
            <person name="Goble A."/>
            <person name="Hamlin N."/>
            <person name="Harris D.E."/>
            <person name="Hidalgo J."/>
            <person name="Hodgson G."/>
            <person name="Holroyd S."/>
            <person name="Hornsby T."/>
            <person name="Howarth S."/>
            <person name="Huckle E.J."/>
            <person name="Hunt S."/>
            <person name="Jagels K."/>
            <person name="James K.D."/>
            <person name="Jones L."/>
            <person name="Jones M."/>
            <person name="Leather S."/>
            <person name="McDonald S."/>
            <person name="McLean J."/>
            <person name="Mooney P."/>
            <person name="Moule S."/>
            <person name="Mungall K.L."/>
            <person name="Murphy L.D."/>
            <person name="Niblett D."/>
            <person name="Odell C."/>
            <person name="Oliver K."/>
            <person name="O'Neil S."/>
            <person name="Pearson D."/>
            <person name="Quail M.A."/>
            <person name="Rabbinowitsch E."/>
            <person name="Rutherford K.M."/>
            <person name="Rutter S."/>
            <person name="Saunders D."/>
            <person name="Seeger K."/>
            <person name="Sharp S."/>
            <person name="Skelton J."/>
            <person name="Simmonds M.N."/>
            <person name="Squares R."/>
            <person name="Squares S."/>
            <person name="Stevens K."/>
            <person name="Taylor K."/>
            <person name="Taylor R.G."/>
            <person name="Tivey A."/>
            <person name="Walsh S.V."/>
            <person name="Warren T."/>
            <person name="Whitehead S."/>
            <person name="Woodward J.R."/>
            <person name="Volckaert G."/>
            <person name="Aert R."/>
            <person name="Robben J."/>
            <person name="Grymonprez B."/>
            <person name="Weltjens I."/>
            <person name="Vanstreels E."/>
            <person name="Rieger M."/>
            <person name="Schaefer M."/>
            <person name="Mueller-Auer S."/>
            <person name="Gabel C."/>
            <person name="Fuchs M."/>
            <person name="Duesterhoeft A."/>
            <person name="Fritzc C."/>
            <person name="Holzer E."/>
            <person name="Moestl D."/>
            <person name="Hilbert H."/>
            <person name="Borzym K."/>
            <person name="Langer I."/>
            <person name="Beck A."/>
            <person name="Lehrach H."/>
            <person name="Reinhardt R."/>
            <person name="Pohl T.M."/>
            <person name="Eger P."/>
            <person name="Zimmermann W."/>
            <person name="Wedler H."/>
            <person name="Wambutt R."/>
            <person name="Purnelle B."/>
            <person name="Goffeau A."/>
            <person name="Cadieu E."/>
            <person name="Dreano S."/>
            <person name="Gloux S."/>
            <person name="Lelaure V."/>
            <person name="Mottier S."/>
            <person name="Galibert F."/>
            <person name="Aves S.J."/>
            <person name="Xiang Z."/>
            <person name="Hunt C."/>
            <person name="Moore K."/>
            <person name="Hurst S.M."/>
            <person name="Lucas M."/>
            <person name="Rochet M."/>
            <person name="Gaillardin C."/>
            <person name="Tallada V.A."/>
            <person name="Garzon A."/>
            <person name="Thode G."/>
            <person name="Daga R.R."/>
            <person name="Cruzado L."/>
            <person name="Jimenez J."/>
            <person name="Sanchez M."/>
            <person name="del Rey F."/>
            <person name="Benito J."/>
            <person name="Dominguez A."/>
            <person name="Revuelta J.L."/>
            <person name="Moreno S."/>
            <person name="Armstrong J."/>
            <person name="Forsburg S.L."/>
            <person name="Cerutti L."/>
            <person name="Lowe T."/>
            <person name="McCombie W.R."/>
            <person name="Paulsen I."/>
            <person name="Potashkin J."/>
            <person name="Shpakovski G.V."/>
            <person name="Ussery D."/>
            <person name="Barrell B.G."/>
            <person name="Nurse P."/>
        </authorList>
    </citation>
    <scope>NUCLEOTIDE SEQUENCE [LARGE SCALE GENOMIC DNA]</scope>
    <source>
        <strain>972 / ATCC 24843</strain>
    </source>
</reference>
<keyword id="KW-0184">Conjugation</keyword>
<keyword id="KW-0469">Meiosis</keyword>
<keyword id="KW-1185">Reference proteome</keyword>
<keyword id="KW-0346">Stress response</keyword>
<organism>
    <name type="scientific">Schizosaccharomyces pombe (strain 972 / ATCC 24843)</name>
    <name type="common">Fission yeast</name>
    <dbReference type="NCBI Taxonomy" id="284812"/>
    <lineage>
        <taxon>Eukaryota</taxon>
        <taxon>Fungi</taxon>
        <taxon>Dikarya</taxon>
        <taxon>Ascomycota</taxon>
        <taxon>Taphrinomycotina</taxon>
        <taxon>Schizosaccharomycetes</taxon>
        <taxon>Schizosaccharomycetales</taxon>
        <taxon>Schizosaccharomycetaceae</taxon>
        <taxon>Schizosaccharomyces</taxon>
    </lineage>
</organism>
<proteinExistence type="evidence at protein level"/>
<accession>Q10136</accession>
<evidence type="ECO:0000256" key="1">
    <source>
        <dbReference type="SAM" id="MobiDB-lite"/>
    </source>
</evidence>
<evidence type="ECO:0000305" key="2"/>
<gene>
    <name type="primary">ste7</name>
    <name type="ORF">SPAC23E2.03c</name>
</gene>
<feature type="chain" id="PRO_0000072267" description="Protein ste7">
    <location>
        <begin position="1"/>
        <end position="569"/>
    </location>
</feature>
<feature type="region of interest" description="Disordered" evidence="1">
    <location>
        <begin position="195"/>
        <end position="219"/>
    </location>
</feature>
<feature type="region of interest" description="Disordered" evidence="1">
    <location>
        <begin position="255"/>
        <end position="274"/>
    </location>
</feature>
<feature type="compositionally biased region" description="Low complexity" evidence="1">
    <location>
        <begin position="198"/>
        <end position="219"/>
    </location>
</feature>
<feature type="compositionally biased region" description="Pro residues" evidence="1">
    <location>
        <begin position="264"/>
        <end position="274"/>
    </location>
</feature>
<sequence length="569" mass="61102">MFLEIILDSATYSFDRVITGKICFETNAATSPRSFQIQLRIKGYAVYHHGFLSSPSHKHPTTASASDSDEATEIFTHSQPLPIPAGPSSKSHAIDFKFKFPSKSASSLPCSKSNDSMVNICYMLKATISKRYAFLGSSQSAKAELIMVPPNLAGKPLSANSSFGSSAKTFQLPEFDSVTPSASLYKQPSFNSNPAPITTSSATHTSQFSTSSSSSVNSVHTPVMVPNPYFQYNSSMTAPSSSSSSVAPFVPRRQFSVSSASDPPQTPISMSPPIPPTPSQFSAFMYQNQQSYLSPQSHYENPLSISSRPSPCCPSTPSSAVTLSNGFDSQSNAYNNSGTGPPMLYKFPQRSYTAPNTSFNSQRRMSSITSLPTASFCPVKHGVSPPSLAGNQPSPLSSPLTNSNVSPSTICSPDNNVTFVNLAPGEKLTFKIEPNDLMDEEEVVENSNMYSIPGKTVATTVCHSSSSSGDFSALSCHRNLSFSESLPTAEDQVHNNHCAVSPSRRSSSNALYLATLPMGYERSNSVSYCSDSSLSSPLPDDNMLQDPHALNMAYAKEFDVLINEVLQSL</sequence>
<dbReference type="EMBL" id="AB036789">
    <property type="protein sequence ID" value="BAA90541.1"/>
    <property type="molecule type" value="Genomic_DNA"/>
</dbReference>
<dbReference type="EMBL" id="CU329670">
    <property type="protein sequence ID" value="CAA93115.3"/>
    <property type="molecule type" value="Genomic_DNA"/>
</dbReference>
<dbReference type="PIR" id="T38293">
    <property type="entry name" value="T38293"/>
</dbReference>
<dbReference type="RefSeq" id="NP_592938.1">
    <property type="nucleotide sequence ID" value="NM_001018339.2"/>
</dbReference>
<dbReference type="BioGRID" id="278019">
    <property type="interactions" value="4"/>
</dbReference>
<dbReference type="STRING" id="284812.Q10136"/>
<dbReference type="iPTMnet" id="Q10136"/>
<dbReference type="PaxDb" id="4896-SPAC23E2.03c.1"/>
<dbReference type="EnsemblFungi" id="SPAC23E2.03c.1">
    <property type="protein sequence ID" value="SPAC23E2.03c.1:pep"/>
    <property type="gene ID" value="SPAC23E2.03c"/>
</dbReference>
<dbReference type="GeneID" id="2541518"/>
<dbReference type="KEGG" id="spo:2541518"/>
<dbReference type="PomBase" id="SPAC23E2.03c">
    <property type="gene designation" value="ste7"/>
</dbReference>
<dbReference type="VEuPathDB" id="FungiDB:SPAC23E2.03c"/>
<dbReference type="HOGENOM" id="CLU_528023_0_0_1"/>
<dbReference type="InParanoid" id="Q10136"/>
<dbReference type="OMA" id="APHNHPA"/>
<dbReference type="PRO" id="PR:Q10136"/>
<dbReference type="Proteomes" id="UP000002485">
    <property type="component" value="Chromosome I"/>
</dbReference>
<dbReference type="GO" id="GO:0032153">
    <property type="term" value="C:cell division site"/>
    <property type="evidence" value="ECO:0007005"/>
    <property type="project" value="PomBase"/>
</dbReference>
<dbReference type="GO" id="GO:0005737">
    <property type="term" value="C:cytoplasm"/>
    <property type="evidence" value="ECO:0000314"/>
    <property type="project" value="PomBase"/>
</dbReference>
<dbReference type="GO" id="GO:0005829">
    <property type="term" value="C:cytosol"/>
    <property type="evidence" value="ECO:0007005"/>
    <property type="project" value="PomBase"/>
</dbReference>
<dbReference type="GO" id="GO:0044732">
    <property type="term" value="C:mitotic spindle pole body"/>
    <property type="evidence" value="ECO:0007005"/>
    <property type="project" value="PomBase"/>
</dbReference>
<dbReference type="GO" id="GO:0005634">
    <property type="term" value="C:nucleus"/>
    <property type="evidence" value="ECO:0000314"/>
    <property type="project" value="PomBase"/>
</dbReference>
<dbReference type="GO" id="GO:0000747">
    <property type="term" value="P:conjugation with cellular fusion"/>
    <property type="evidence" value="ECO:0000315"/>
    <property type="project" value="PomBase"/>
</dbReference>
<dbReference type="GO" id="GO:0051321">
    <property type="term" value="P:meiotic cell cycle"/>
    <property type="evidence" value="ECO:0000316"/>
    <property type="project" value="PomBase"/>
</dbReference>
<dbReference type="Gene3D" id="2.60.40.640">
    <property type="match status" value="1"/>
</dbReference>
<dbReference type="InterPro" id="IPR014752">
    <property type="entry name" value="Arrestin-like_C"/>
</dbReference>
<name>STE7_SCHPO</name>
<protein>
    <recommendedName>
        <fullName>Protein ste7</fullName>
    </recommendedName>
</protein>
<comment type="function">
    <text>Has a role in promoting meiosis whereby it is involved in establishing the mating pheromone signaling pathway. It also has a role in suppressing meiosis until the conjugation process is complete.</text>
</comment>
<comment type="induction">
    <text>By nitrogen starvation.</text>
</comment>
<comment type="similarity">
    <text evidence="2">Belongs to the arrestin family.</text>
</comment>